<keyword id="KW-0963">Cytoplasm</keyword>
<keyword id="KW-0460">Magnesium</keyword>
<keyword id="KW-0479">Metal-binding</keyword>
<keyword id="KW-0548">Nucleotidyltransferase</keyword>
<keyword id="KW-0694">RNA-binding</keyword>
<keyword id="KW-0808">Transferase</keyword>
<dbReference type="EC" id="2.7.7.8" evidence="1"/>
<dbReference type="EMBL" id="CP000726">
    <property type="protein sequence ID" value="ABS35444.1"/>
    <property type="molecule type" value="Genomic_DNA"/>
</dbReference>
<dbReference type="RefSeq" id="WP_011986787.1">
    <property type="nucleotide sequence ID" value="NC_009697.1"/>
</dbReference>
<dbReference type="SMR" id="A7FVY7"/>
<dbReference type="KEGG" id="cba:CLB_2276"/>
<dbReference type="HOGENOM" id="CLU_004217_2_2_9"/>
<dbReference type="GO" id="GO:0005829">
    <property type="term" value="C:cytosol"/>
    <property type="evidence" value="ECO:0007669"/>
    <property type="project" value="TreeGrafter"/>
</dbReference>
<dbReference type="GO" id="GO:0000175">
    <property type="term" value="F:3'-5'-RNA exonuclease activity"/>
    <property type="evidence" value="ECO:0007669"/>
    <property type="project" value="TreeGrafter"/>
</dbReference>
<dbReference type="GO" id="GO:0000287">
    <property type="term" value="F:magnesium ion binding"/>
    <property type="evidence" value="ECO:0007669"/>
    <property type="project" value="UniProtKB-UniRule"/>
</dbReference>
<dbReference type="GO" id="GO:0004654">
    <property type="term" value="F:polyribonucleotide nucleotidyltransferase activity"/>
    <property type="evidence" value="ECO:0007669"/>
    <property type="project" value="UniProtKB-UniRule"/>
</dbReference>
<dbReference type="GO" id="GO:0003723">
    <property type="term" value="F:RNA binding"/>
    <property type="evidence" value="ECO:0007669"/>
    <property type="project" value="UniProtKB-UniRule"/>
</dbReference>
<dbReference type="GO" id="GO:0006402">
    <property type="term" value="P:mRNA catabolic process"/>
    <property type="evidence" value="ECO:0007669"/>
    <property type="project" value="UniProtKB-UniRule"/>
</dbReference>
<dbReference type="GO" id="GO:0006396">
    <property type="term" value="P:RNA processing"/>
    <property type="evidence" value="ECO:0007669"/>
    <property type="project" value="InterPro"/>
</dbReference>
<dbReference type="CDD" id="cd02393">
    <property type="entry name" value="KH-I_PNPase"/>
    <property type="match status" value="1"/>
</dbReference>
<dbReference type="CDD" id="cd11363">
    <property type="entry name" value="RNase_PH_PNPase_1"/>
    <property type="match status" value="1"/>
</dbReference>
<dbReference type="CDD" id="cd11364">
    <property type="entry name" value="RNase_PH_PNPase_2"/>
    <property type="match status" value="1"/>
</dbReference>
<dbReference type="CDD" id="cd04472">
    <property type="entry name" value="S1_PNPase"/>
    <property type="match status" value="1"/>
</dbReference>
<dbReference type="FunFam" id="2.40.50.140:FF:000023">
    <property type="entry name" value="Polyribonucleotide nucleotidyltransferase"/>
    <property type="match status" value="1"/>
</dbReference>
<dbReference type="FunFam" id="3.30.1370.10:FF:000001">
    <property type="entry name" value="Polyribonucleotide nucleotidyltransferase"/>
    <property type="match status" value="1"/>
</dbReference>
<dbReference type="FunFam" id="3.30.230.70:FF:000001">
    <property type="entry name" value="Polyribonucleotide nucleotidyltransferase"/>
    <property type="match status" value="1"/>
</dbReference>
<dbReference type="FunFam" id="3.30.230.70:FF:000037">
    <property type="entry name" value="Polyribonucleotide nucleotidyltransferase"/>
    <property type="match status" value="1"/>
</dbReference>
<dbReference type="Gene3D" id="3.30.230.70">
    <property type="entry name" value="GHMP Kinase, N-terminal domain"/>
    <property type="match status" value="2"/>
</dbReference>
<dbReference type="Gene3D" id="3.30.1370.10">
    <property type="entry name" value="K Homology domain, type 1"/>
    <property type="match status" value="1"/>
</dbReference>
<dbReference type="Gene3D" id="2.40.50.140">
    <property type="entry name" value="Nucleic acid-binding proteins"/>
    <property type="match status" value="1"/>
</dbReference>
<dbReference type="HAMAP" id="MF_01595">
    <property type="entry name" value="PNPase"/>
    <property type="match status" value="1"/>
</dbReference>
<dbReference type="InterPro" id="IPR001247">
    <property type="entry name" value="ExoRNase_PH_dom1"/>
</dbReference>
<dbReference type="InterPro" id="IPR015847">
    <property type="entry name" value="ExoRNase_PH_dom2"/>
</dbReference>
<dbReference type="InterPro" id="IPR036345">
    <property type="entry name" value="ExoRNase_PH_dom2_sf"/>
</dbReference>
<dbReference type="InterPro" id="IPR004087">
    <property type="entry name" value="KH_dom"/>
</dbReference>
<dbReference type="InterPro" id="IPR004088">
    <property type="entry name" value="KH_dom_type_1"/>
</dbReference>
<dbReference type="InterPro" id="IPR036612">
    <property type="entry name" value="KH_dom_type_1_sf"/>
</dbReference>
<dbReference type="InterPro" id="IPR012340">
    <property type="entry name" value="NA-bd_OB-fold"/>
</dbReference>
<dbReference type="InterPro" id="IPR012162">
    <property type="entry name" value="PNPase"/>
</dbReference>
<dbReference type="InterPro" id="IPR027408">
    <property type="entry name" value="PNPase/RNase_PH_dom_sf"/>
</dbReference>
<dbReference type="InterPro" id="IPR015848">
    <property type="entry name" value="PNPase_PH_RNA-bd_bac/org-type"/>
</dbReference>
<dbReference type="InterPro" id="IPR036456">
    <property type="entry name" value="PNPase_PH_RNA-bd_sf"/>
</dbReference>
<dbReference type="InterPro" id="IPR020568">
    <property type="entry name" value="Ribosomal_Su5_D2-typ_SF"/>
</dbReference>
<dbReference type="InterPro" id="IPR003029">
    <property type="entry name" value="S1_domain"/>
</dbReference>
<dbReference type="NCBIfam" id="TIGR03591">
    <property type="entry name" value="polynuc_phos"/>
    <property type="match status" value="1"/>
</dbReference>
<dbReference type="NCBIfam" id="NF008805">
    <property type="entry name" value="PRK11824.1"/>
    <property type="match status" value="1"/>
</dbReference>
<dbReference type="PANTHER" id="PTHR11252">
    <property type="entry name" value="POLYRIBONUCLEOTIDE NUCLEOTIDYLTRANSFERASE"/>
    <property type="match status" value="1"/>
</dbReference>
<dbReference type="PANTHER" id="PTHR11252:SF0">
    <property type="entry name" value="POLYRIBONUCLEOTIDE NUCLEOTIDYLTRANSFERASE 1, MITOCHONDRIAL"/>
    <property type="match status" value="1"/>
</dbReference>
<dbReference type="Pfam" id="PF00013">
    <property type="entry name" value="KH_1"/>
    <property type="match status" value="1"/>
</dbReference>
<dbReference type="Pfam" id="PF03726">
    <property type="entry name" value="PNPase"/>
    <property type="match status" value="1"/>
</dbReference>
<dbReference type="Pfam" id="PF01138">
    <property type="entry name" value="RNase_PH"/>
    <property type="match status" value="2"/>
</dbReference>
<dbReference type="Pfam" id="PF03725">
    <property type="entry name" value="RNase_PH_C"/>
    <property type="match status" value="1"/>
</dbReference>
<dbReference type="Pfam" id="PF00575">
    <property type="entry name" value="S1"/>
    <property type="match status" value="1"/>
</dbReference>
<dbReference type="PIRSF" id="PIRSF005499">
    <property type="entry name" value="PNPase"/>
    <property type="match status" value="1"/>
</dbReference>
<dbReference type="SMART" id="SM00322">
    <property type="entry name" value="KH"/>
    <property type="match status" value="1"/>
</dbReference>
<dbReference type="SMART" id="SM00316">
    <property type="entry name" value="S1"/>
    <property type="match status" value="1"/>
</dbReference>
<dbReference type="SUPFAM" id="SSF54791">
    <property type="entry name" value="Eukaryotic type KH-domain (KH-domain type I)"/>
    <property type="match status" value="1"/>
</dbReference>
<dbReference type="SUPFAM" id="SSF50249">
    <property type="entry name" value="Nucleic acid-binding proteins"/>
    <property type="match status" value="1"/>
</dbReference>
<dbReference type="SUPFAM" id="SSF46915">
    <property type="entry name" value="Polynucleotide phosphorylase/guanosine pentaphosphate synthase (PNPase/GPSI), domain 3"/>
    <property type="match status" value="1"/>
</dbReference>
<dbReference type="SUPFAM" id="SSF55666">
    <property type="entry name" value="Ribonuclease PH domain 2-like"/>
    <property type="match status" value="2"/>
</dbReference>
<dbReference type="SUPFAM" id="SSF54211">
    <property type="entry name" value="Ribosomal protein S5 domain 2-like"/>
    <property type="match status" value="2"/>
</dbReference>
<dbReference type="PROSITE" id="PS50084">
    <property type="entry name" value="KH_TYPE_1"/>
    <property type="match status" value="1"/>
</dbReference>
<dbReference type="PROSITE" id="PS50126">
    <property type="entry name" value="S1"/>
    <property type="match status" value="1"/>
</dbReference>
<gene>
    <name evidence="1" type="primary">pnp</name>
    <name type="ordered locus">CLB_2276</name>
</gene>
<comment type="function">
    <text evidence="1">Involved in mRNA degradation. Catalyzes the phosphorolysis of single-stranded polyribonucleotides processively in the 3'- to 5'-direction.</text>
</comment>
<comment type="catalytic activity">
    <reaction evidence="1">
        <text>RNA(n+1) + phosphate = RNA(n) + a ribonucleoside 5'-diphosphate</text>
        <dbReference type="Rhea" id="RHEA:22096"/>
        <dbReference type="Rhea" id="RHEA-COMP:14527"/>
        <dbReference type="Rhea" id="RHEA-COMP:17342"/>
        <dbReference type="ChEBI" id="CHEBI:43474"/>
        <dbReference type="ChEBI" id="CHEBI:57930"/>
        <dbReference type="ChEBI" id="CHEBI:140395"/>
        <dbReference type="EC" id="2.7.7.8"/>
    </reaction>
</comment>
<comment type="cofactor">
    <cofactor evidence="1">
        <name>Mg(2+)</name>
        <dbReference type="ChEBI" id="CHEBI:18420"/>
    </cofactor>
</comment>
<comment type="subcellular location">
    <subcellularLocation>
        <location evidence="1">Cytoplasm</location>
    </subcellularLocation>
</comment>
<comment type="similarity">
    <text evidence="1">Belongs to the polyribonucleotide nucleotidyltransferase family.</text>
</comment>
<organism>
    <name type="scientific">Clostridium botulinum (strain ATCC 19397 / Type A)</name>
    <dbReference type="NCBI Taxonomy" id="441770"/>
    <lineage>
        <taxon>Bacteria</taxon>
        <taxon>Bacillati</taxon>
        <taxon>Bacillota</taxon>
        <taxon>Clostridia</taxon>
        <taxon>Eubacteriales</taxon>
        <taxon>Clostridiaceae</taxon>
        <taxon>Clostridium</taxon>
    </lineage>
</organism>
<feature type="chain" id="PRO_0000329595" description="Polyribonucleotide nucleotidyltransferase">
    <location>
        <begin position="1"/>
        <end position="702"/>
    </location>
</feature>
<feature type="domain" description="KH" evidence="1">
    <location>
        <begin position="552"/>
        <end position="612"/>
    </location>
</feature>
<feature type="domain" description="S1 motif" evidence="1">
    <location>
        <begin position="622"/>
        <end position="690"/>
    </location>
</feature>
<feature type="binding site" evidence="1">
    <location>
        <position position="485"/>
    </location>
    <ligand>
        <name>Mg(2+)</name>
        <dbReference type="ChEBI" id="CHEBI:18420"/>
    </ligand>
</feature>
<feature type="binding site" evidence="1">
    <location>
        <position position="491"/>
    </location>
    <ligand>
        <name>Mg(2+)</name>
        <dbReference type="ChEBI" id="CHEBI:18420"/>
    </ligand>
</feature>
<sequence>MIHTLETTVAGRKMKVDFGKTGMLSNAAIFMSYGDTVVMINANASKEPREGIDFFPLSVEYEERLYSVGKIPGGFIKREGKPSDKSILHARSIDRPLRPLFPKGYRNDVQIVNTVLSVEQDNLPEILAINGSSLALCLSSIPFTTPVAAVSVGLVDGEFIINPTVAQRENTILDLTVCATKERVMMVEAGGQEIDEETMYSAIMFGFEECKNIVAFQEEAVAKFGKTKNEPVLYKADEEVEKEVKSFAFDMIKEAMYIMDKDERNAQLDKVKEKISEEFSEKYEDKVADIAEVIYKTQKEIVRNMLLNEDRRPDGRAFDEVRPISCEVGILPRTHGTGLFTRGLTQVMTVATLGALGDVQILDGIAEEESKRYMHHYNFPSYSVGEVRPLRGPGRREIGHGALAERALEPLIPSQSEFPYTIRLVSEVLSSNGSTSQASVCGSTLALLDAGVPIKRPAAGIAMGLITSEDLEKEKVITDIQGIEDFFGDMDFKVAGTEKGITSIQFDTKIKGLSNSCVKDALEGAKKARLHILGKIKECIPEPRKELSKYAPRTEIICIDPEKIRDVIGAGGKVINKIIADTNVKIEIKEDGKIFVTSNNEPEGVKKAISIIEGLTKEVVQGEIYLGKVTKTTNFGAFVEILPGKEGLVHISKLDFARVEKVEDVVSVGDEILVKVTDIDNQGRINLSRKDAIAKKEEEKDK</sequence>
<evidence type="ECO:0000255" key="1">
    <source>
        <dbReference type="HAMAP-Rule" id="MF_01595"/>
    </source>
</evidence>
<proteinExistence type="inferred from homology"/>
<protein>
    <recommendedName>
        <fullName evidence="1">Polyribonucleotide nucleotidyltransferase</fullName>
        <ecNumber evidence="1">2.7.7.8</ecNumber>
    </recommendedName>
    <alternativeName>
        <fullName evidence="1">Polynucleotide phosphorylase</fullName>
        <shortName evidence="1">PNPase</shortName>
    </alternativeName>
</protein>
<accession>A7FVY7</accession>
<reference key="1">
    <citation type="journal article" date="2007" name="PLoS ONE">
        <title>Analysis of the neurotoxin complex genes in Clostridium botulinum A1-A4 and B1 strains: BoNT/A3, /Ba4 and /B1 clusters are located within plasmids.</title>
        <authorList>
            <person name="Smith T.J."/>
            <person name="Hill K.K."/>
            <person name="Foley B.T."/>
            <person name="Detter J.C."/>
            <person name="Munk A.C."/>
            <person name="Bruce D.C."/>
            <person name="Doggett N.A."/>
            <person name="Smith L.A."/>
            <person name="Marks J.D."/>
            <person name="Xie G."/>
            <person name="Brettin T.S."/>
        </authorList>
    </citation>
    <scope>NUCLEOTIDE SEQUENCE [LARGE SCALE GENOMIC DNA]</scope>
    <source>
        <strain>ATCC 19397 / Type A</strain>
    </source>
</reference>
<name>PNP_CLOB1</name>